<name>DBP5_ASPCL</name>
<evidence type="ECO:0000250" key="1"/>
<evidence type="ECO:0000255" key="2">
    <source>
        <dbReference type="PROSITE-ProRule" id="PRU00541"/>
    </source>
</evidence>
<evidence type="ECO:0000255" key="3">
    <source>
        <dbReference type="PROSITE-ProRule" id="PRU00542"/>
    </source>
</evidence>
<evidence type="ECO:0000256" key="4">
    <source>
        <dbReference type="SAM" id="MobiDB-lite"/>
    </source>
</evidence>
<evidence type="ECO:0000305" key="5"/>
<proteinExistence type="inferred from homology"/>
<reference key="1">
    <citation type="journal article" date="2008" name="PLoS Genet.">
        <title>Genomic islands in the pathogenic filamentous fungus Aspergillus fumigatus.</title>
        <authorList>
            <person name="Fedorova N.D."/>
            <person name="Khaldi N."/>
            <person name="Joardar V.S."/>
            <person name="Maiti R."/>
            <person name="Amedeo P."/>
            <person name="Anderson M.J."/>
            <person name="Crabtree J."/>
            <person name="Silva J.C."/>
            <person name="Badger J.H."/>
            <person name="Albarraq A."/>
            <person name="Angiuoli S."/>
            <person name="Bussey H."/>
            <person name="Bowyer P."/>
            <person name="Cotty P.J."/>
            <person name="Dyer P.S."/>
            <person name="Egan A."/>
            <person name="Galens K."/>
            <person name="Fraser-Liggett C.M."/>
            <person name="Haas B.J."/>
            <person name="Inman J.M."/>
            <person name="Kent R."/>
            <person name="Lemieux S."/>
            <person name="Malavazi I."/>
            <person name="Orvis J."/>
            <person name="Roemer T."/>
            <person name="Ronning C.M."/>
            <person name="Sundaram J.P."/>
            <person name="Sutton G."/>
            <person name="Turner G."/>
            <person name="Venter J.C."/>
            <person name="White O.R."/>
            <person name="Whitty B.R."/>
            <person name="Youngman P."/>
            <person name="Wolfe K.H."/>
            <person name="Goldman G.H."/>
            <person name="Wortman J.R."/>
            <person name="Jiang B."/>
            <person name="Denning D.W."/>
            <person name="Nierman W.C."/>
        </authorList>
    </citation>
    <scope>NUCLEOTIDE SEQUENCE [LARGE SCALE GENOMIC DNA]</scope>
    <source>
        <strain>ATCC 1007 / CBS 513.65 / DSM 816 / NCTC 3887 / NRRL 1 / QM 1276 / 107</strain>
    </source>
</reference>
<comment type="function">
    <text evidence="1">ATP-dependent RNA helicase associated with the nuclear pore complex and essential for mRNA export from the nucleus. May participate in a terminal step of mRNA export through the removal of proteins that accompany mRNA through the nucleopore complex. May also be involved in early transcription (By similarity).</text>
</comment>
<comment type="catalytic activity">
    <reaction>
        <text>ATP + H2O = ADP + phosphate + H(+)</text>
        <dbReference type="Rhea" id="RHEA:13065"/>
        <dbReference type="ChEBI" id="CHEBI:15377"/>
        <dbReference type="ChEBI" id="CHEBI:15378"/>
        <dbReference type="ChEBI" id="CHEBI:30616"/>
        <dbReference type="ChEBI" id="CHEBI:43474"/>
        <dbReference type="ChEBI" id="CHEBI:456216"/>
        <dbReference type="EC" id="3.6.4.13"/>
    </reaction>
</comment>
<comment type="subunit">
    <text evidence="1">Associates with the nuclear pore complex.</text>
</comment>
<comment type="subcellular location">
    <subcellularLocation>
        <location evidence="1">Cytoplasm</location>
    </subcellularLocation>
    <subcellularLocation>
        <location>Nucleus</location>
        <location>Nuclear pore complex</location>
    </subcellularLocation>
    <subcellularLocation>
        <location evidence="1">Nucleus membrane</location>
        <topology evidence="1">Peripheral membrane protein</topology>
        <orientation evidence="1">Cytoplasmic side</orientation>
    </subcellularLocation>
    <text evidence="1">Nuclear pore complex cytoplasmic fibrils.</text>
</comment>
<comment type="domain">
    <text>The Q motif is unique to and characteristic of the DEAD box family of RNA helicases and controls ATP binding and hydrolysis.</text>
</comment>
<comment type="similarity">
    <text evidence="5">Belongs to the DEAD box helicase family. DDX19/DBP5 subfamily.</text>
</comment>
<dbReference type="EC" id="3.6.4.13"/>
<dbReference type="EMBL" id="DS027052">
    <property type="protein sequence ID" value="EAW11752.1"/>
    <property type="molecule type" value="Genomic_DNA"/>
</dbReference>
<dbReference type="RefSeq" id="XP_001273178.1">
    <property type="nucleotide sequence ID" value="XM_001273177.1"/>
</dbReference>
<dbReference type="SMR" id="A1CFV3"/>
<dbReference type="STRING" id="344612.A1CFV3"/>
<dbReference type="EnsemblFungi" id="EAW11752">
    <property type="protein sequence ID" value="EAW11752"/>
    <property type="gene ID" value="ACLA_094520"/>
</dbReference>
<dbReference type="GeneID" id="4704748"/>
<dbReference type="KEGG" id="act:ACLA_094520"/>
<dbReference type="VEuPathDB" id="FungiDB:ACLA_094520"/>
<dbReference type="eggNOG" id="KOG0332">
    <property type="taxonomic scope" value="Eukaryota"/>
</dbReference>
<dbReference type="HOGENOM" id="CLU_003041_1_0_1"/>
<dbReference type="OMA" id="IAAETRW"/>
<dbReference type="OrthoDB" id="10265785at2759"/>
<dbReference type="Proteomes" id="UP000006701">
    <property type="component" value="Unassembled WGS sequence"/>
</dbReference>
<dbReference type="GO" id="GO:0005934">
    <property type="term" value="C:cellular bud tip"/>
    <property type="evidence" value="ECO:0007669"/>
    <property type="project" value="EnsemblFungi"/>
</dbReference>
<dbReference type="GO" id="GO:0010494">
    <property type="term" value="C:cytoplasmic stress granule"/>
    <property type="evidence" value="ECO:0007669"/>
    <property type="project" value="EnsemblFungi"/>
</dbReference>
<dbReference type="GO" id="GO:0031965">
    <property type="term" value="C:nuclear membrane"/>
    <property type="evidence" value="ECO:0007669"/>
    <property type="project" value="UniProtKB-SubCell"/>
</dbReference>
<dbReference type="GO" id="GO:0044614">
    <property type="term" value="C:nuclear pore cytoplasmic filaments"/>
    <property type="evidence" value="ECO:0007669"/>
    <property type="project" value="EnsemblFungi"/>
</dbReference>
<dbReference type="GO" id="GO:0005524">
    <property type="term" value="F:ATP binding"/>
    <property type="evidence" value="ECO:0007669"/>
    <property type="project" value="UniProtKB-KW"/>
</dbReference>
<dbReference type="GO" id="GO:0016887">
    <property type="term" value="F:ATP hydrolysis activity"/>
    <property type="evidence" value="ECO:0007669"/>
    <property type="project" value="RHEA"/>
</dbReference>
<dbReference type="GO" id="GO:0000822">
    <property type="term" value="F:inositol hexakisphosphate binding"/>
    <property type="evidence" value="ECO:0007669"/>
    <property type="project" value="EnsemblFungi"/>
</dbReference>
<dbReference type="GO" id="GO:0003723">
    <property type="term" value="F:RNA binding"/>
    <property type="evidence" value="ECO:0007669"/>
    <property type="project" value="UniProtKB-KW"/>
</dbReference>
<dbReference type="GO" id="GO:0003724">
    <property type="term" value="F:RNA helicase activity"/>
    <property type="evidence" value="ECO:0007669"/>
    <property type="project" value="UniProtKB-EC"/>
</dbReference>
<dbReference type="GO" id="GO:0016973">
    <property type="term" value="P:poly(A)+ mRNA export from nucleus"/>
    <property type="evidence" value="ECO:0007669"/>
    <property type="project" value="EnsemblFungi"/>
</dbReference>
<dbReference type="GO" id="GO:0015031">
    <property type="term" value="P:protein transport"/>
    <property type="evidence" value="ECO:0007669"/>
    <property type="project" value="UniProtKB-KW"/>
</dbReference>
<dbReference type="GO" id="GO:0006415">
    <property type="term" value="P:translational termination"/>
    <property type="evidence" value="ECO:0007669"/>
    <property type="project" value="EnsemblFungi"/>
</dbReference>
<dbReference type="GO" id="GO:0006409">
    <property type="term" value="P:tRNA export from nucleus"/>
    <property type="evidence" value="ECO:0007669"/>
    <property type="project" value="EnsemblFungi"/>
</dbReference>
<dbReference type="CDD" id="cd17963">
    <property type="entry name" value="DEADc_DDX19_DDX25"/>
    <property type="match status" value="1"/>
</dbReference>
<dbReference type="CDD" id="cd18787">
    <property type="entry name" value="SF2_C_DEAD"/>
    <property type="match status" value="1"/>
</dbReference>
<dbReference type="FunFam" id="3.40.50.300:FF:000849">
    <property type="entry name" value="ATP-dependent RNA helicase DBP5"/>
    <property type="match status" value="1"/>
</dbReference>
<dbReference type="Gene3D" id="3.40.50.300">
    <property type="entry name" value="P-loop containing nucleotide triphosphate hydrolases"/>
    <property type="match status" value="2"/>
</dbReference>
<dbReference type="InterPro" id="IPR011545">
    <property type="entry name" value="DEAD/DEAH_box_helicase_dom"/>
</dbReference>
<dbReference type="InterPro" id="IPR014001">
    <property type="entry name" value="Helicase_ATP-bd"/>
</dbReference>
<dbReference type="InterPro" id="IPR001650">
    <property type="entry name" value="Helicase_C-like"/>
</dbReference>
<dbReference type="InterPro" id="IPR027417">
    <property type="entry name" value="P-loop_NTPase"/>
</dbReference>
<dbReference type="InterPro" id="IPR000629">
    <property type="entry name" value="RNA-helicase_DEAD-box_CS"/>
</dbReference>
<dbReference type="InterPro" id="IPR014014">
    <property type="entry name" value="RNA_helicase_DEAD_Q_motif"/>
</dbReference>
<dbReference type="PANTHER" id="PTHR47958">
    <property type="entry name" value="ATP-DEPENDENT RNA HELICASE DBP3"/>
    <property type="match status" value="1"/>
</dbReference>
<dbReference type="Pfam" id="PF00270">
    <property type="entry name" value="DEAD"/>
    <property type="match status" value="1"/>
</dbReference>
<dbReference type="Pfam" id="PF00271">
    <property type="entry name" value="Helicase_C"/>
    <property type="match status" value="1"/>
</dbReference>
<dbReference type="SMART" id="SM00487">
    <property type="entry name" value="DEXDc"/>
    <property type="match status" value="1"/>
</dbReference>
<dbReference type="SMART" id="SM00490">
    <property type="entry name" value="HELICc"/>
    <property type="match status" value="1"/>
</dbReference>
<dbReference type="SUPFAM" id="SSF52540">
    <property type="entry name" value="P-loop containing nucleoside triphosphate hydrolases"/>
    <property type="match status" value="1"/>
</dbReference>
<dbReference type="PROSITE" id="PS00039">
    <property type="entry name" value="DEAD_ATP_HELICASE"/>
    <property type="match status" value="1"/>
</dbReference>
<dbReference type="PROSITE" id="PS51192">
    <property type="entry name" value="HELICASE_ATP_BIND_1"/>
    <property type="match status" value="1"/>
</dbReference>
<dbReference type="PROSITE" id="PS51194">
    <property type="entry name" value="HELICASE_CTER"/>
    <property type="match status" value="1"/>
</dbReference>
<dbReference type="PROSITE" id="PS51195">
    <property type="entry name" value="Q_MOTIF"/>
    <property type="match status" value="1"/>
</dbReference>
<gene>
    <name type="primary">dbp5</name>
    <name type="ORF">ACLA_094520</name>
</gene>
<keyword id="KW-0067">ATP-binding</keyword>
<keyword id="KW-0963">Cytoplasm</keyword>
<keyword id="KW-0347">Helicase</keyword>
<keyword id="KW-0378">Hydrolase</keyword>
<keyword id="KW-0472">Membrane</keyword>
<keyword id="KW-0509">mRNA transport</keyword>
<keyword id="KW-0906">Nuclear pore complex</keyword>
<keyword id="KW-0547">Nucleotide-binding</keyword>
<keyword id="KW-0539">Nucleus</keyword>
<keyword id="KW-0653">Protein transport</keyword>
<keyword id="KW-1185">Reference proteome</keyword>
<keyword id="KW-0694">RNA-binding</keyword>
<keyword id="KW-0811">Translocation</keyword>
<keyword id="KW-0813">Transport</keyword>
<feature type="chain" id="PRO_0000281702" description="ATP-dependent RNA helicase dbp5">
    <location>
        <begin position="1"/>
        <end position="487"/>
    </location>
</feature>
<feature type="domain" description="Helicase ATP-binding" evidence="2">
    <location>
        <begin position="110"/>
        <end position="283"/>
    </location>
</feature>
<feature type="domain" description="Helicase C-terminal" evidence="3">
    <location>
        <begin position="311"/>
        <end position="467"/>
    </location>
</feature>
<feature type="region of interest" description="Disordered" evidence="4">
    <location>
        <begin position="1"/>
        <end position="51"/>
    </location>
</feature>
<feature type="short sequence motif" description="Q motif">
    <location>
        <begin position="77"/>
        <end position="105"/>
    </location>
</feature>
<feature type="short sequence motif" description="DEAD box">
    <location>
        <begin position="230"/>
        <end position="233"/>
    </location>
</feature>
<feature type="compositionally biased region" description="Polar residues" evidence="4">
    <location>
        <begin position="28"/>
        <end position="38"/>
    </location>
</feature>
<feature type="binding site" evidence="2">
    <location>
        <begin position="123"/>
        <end position="130"/>
    </location>
    <ligand>
        <name>ATP</name>
        <dbReference type="ChEBI" id="CHEBI:30616"/>
    </ligand>
</feature>
<accession>A1CFV3</accession>
<protein>
    <recommendedName>
        <fullName>ATP-dependent RNA helicase dbp5</fullName>
        <ecNumber>3.6.4.13</ecNumber>
    </recommendedName>
</protein>
<organism>
    <name type="scientific">Aspergillus clavatus (strain ATCC 1007 / CBS 513.65 / DSM 816 / NCTC 3887 / NRRL 1 / QM 1276 / 107)</name>
    <dbReference type="NCBI Taxonomy" id="344612"/>
    <lineage>
        <taxon>Eukaryota</taxon>
        <taxon>Fungi</taxon>
        <taxon>Dikarya</taxon>
        <taxon>Ascomycota</taxon>
        <taxon>Pezizomycotina</taxon>
        <taxon>Eurotiomycetes</taxon>
        <taxon>Eurotiomycetidae</taxon>
        <taxon>Eurotiales</taxon>
        <taxon>Aspergillaceae</taxon>
        <taxon>Aspergillus</taxon>
        <taxon>Aspergillus subgen. Fumigati</taxon>
    </lineage>
</organism>
<sequence length="487" mass="53704">MASEQPVEAAPLGGSLSDRISKPDEPTASETPEQTSDQADGASAPLGGSDLREPEYNVEVKLSDLQADPNNPLYSVKNFEDLGLDPRILKGLSAMNFRKPSKIQERALPLLLGNPPKNLVGQSQSGTGKTAAFVLNALSRVDLSTEQMQKTPQALILAPTRELARQIVGVVSVMGQFLDGLIIGTAVPADINNRPKRLECSIAVGTPGTVMDMIKRRIMVPNKLKVLVLDEADNMLDQQGLGDQCIRVKALLPRDIQVVLFSATFPDHVHAYAAKFAPNANELTLQHEELTVEGIKQLYLDCSDEEDKYKTLVQLYGLLTVGSSIIFVQTRTSASEIEKRMVAEGHTVASLTGGIDVTKRDEIIDKFRSGEAKVLITTNVLARGIDVSTVSMVINYDIPELHRPGVPERQADFQTYLHRIGRTGRFGRVGVSISFVSNREEWDMLNQIQRYFNTEIQRVDTKDWDEVEDIIKKTIKNTRANAQFGKQ</sequence>